<sequence length="147" mass="16209">MAKFLLLNGPNLNLLGTREPQIYGSQTLAQICDTLREQAKAHGHVLEDFQSNAEHELVERVHRASREGIDFILINPGAFTHTSIALRDALLGVAIPFIEVHLSNVHAREPFRHKSYLSDVARGVIMGLGPKGYALALDAAIHLTQKN</sequence>
<name>AROQ_THISH</name>
<keyword id="KW-0028">Amino-acid biosynthesis</keyword>
<keyword id="KW-0057">Aromatic amino acid biosynthesis</keyword>
<keyword id="KW-0456">Lyase</keyword>
<keyword id="KW-1185">Reference proteome</keyword>
<organism>
    <name type="scientific">Thioalkalivibrio sulfidiphilus (strain HL-EbGR7)</name>
    <dbReference type="NCBI Taxonomy" id="396588"/>
    <lineage>
        <taxon>Bacteria</taxon>
        <taxon>Pseudomonadati</taxon>
        <taxon>Pseudomonadota</taxon>
        <taxon>Gammaproteobacteria</taxon>
        <taxon>Chromatiales</taxon>
        <taxon>Ectothiorhodospiraceae</taxon>
        <taxon>Thioalkalivibrio</taxon>
    </lineage>
</organism>
<evidence type="ECO:0000255" key="1">
    <source>
        <dbReference type="HAMAP-Rule" id="MF_00169"/>
    </source>
</evidence>
<accession>B8GUV7</accession>
<feature type="chain" id="PRO_1000123700" description="3-dehydroquinate dehydratase">
    <location>
        <begin position="1"/>
        <end position="147"/>
    </location>
</feature>
<feature type="active site" description="Proton acceptor" evidence="1">
    <location>
        <position position="23"/>
    </location>
</feature>
<feature type="active site" description="Proton donor" evidence="1">
    <location>
        <position position="101"/>
    </location>
</feature>
<feature type="binding site" evidence="1">
    <location>
        <position position="75"/>
    </location>
    <ligand>
        <name>substrate</name>
    </ligand>
</feature>
<feature type="binding site" evidence="1">
    <location>
        <position position="81"/>
    </location>
    <ligand>
        <name>substrate</name>
    </ligand>
</feature>
<feature type="binding site" evidence="1">
    <location>
        <position position="88"/>
    </location>
    <ligand>
        <name>substrate</name>
    </ligand>
</feature>
<feature type="binding site" evidence="1">
    <location>
        <begin position="102"/>
        <end position="103"/>
    </location>
    <ligand>
        <name>substrate</name>
    </ligand>
</feature>
<feature type="binding site" evidence="1">
    <location>
        <position position="112"/>
    </location>
    <ligand>
        <name>substrate</name>
    </ligand>
</feature>
<feature type="site" description="Transition state stabilizer" evidence="1">
    <location>
        <position position="18"/>
    </location>
</feature>
<comment type="function">
    <text evidence="1">Catalyzes a trans-dehydration via an enolate intermediate.</text>
</comment>
<comment type="catalytic activity">
    <reaction evidence="1">
        <text>3-dehydroquinate = 3-dehydroshikimate + H2O</text>
        <dbReference type="Rhea" id="RHEA:21096"/>
        <dbReference type="ChEBI" id="CHEBI:15377"/>
        <dbReference type="ChEBI" id="CHEBI:16630"/>
        <dbReference type="ChEBI" id="CHEBI:32364"/>
        <dbReference type="EC" id="4.2.1.10"/>
    </reaction>
</comment>
<comment type="pathway">
    <text evidence="1">Metabolic intermediate biosynthesis; chorismate biosynthesis; chorismate from D-erythrose 4-phosphate and phosphoenolpyruvate: step 3/7.</text>
</comment>
<comment type="subunit">
    <text evidence="1">Homododecamer.</text>
</comment>
<comment type="similarity">
    <text evidence="1">Belongs to the type-II 3-dehydroquinase family.</text>
</comment>
<proteinExistence type="inferred from homology"/>
<protein>
    <recommendedName>
        <fullName evidence="1">3-dehydroquinate dehydratase</fullName>
        <shortName evidence="1">3-dehydroquinase</shortName>
        <ecNumber evidence="1">4.2.1.10</ecNumber>
    </recommendedName>
    <alternativeName>
        <fullName evidence="1">Type II DHQase</fullName>
    </alternativeName>
</protein>
<gene>
    <name evidence="1" type="primary">aroQ</name>
    <name type="ordered locus">Tgr7_0370</name>
</gene>
<reference key="1">
    <citation type="journal article" date="2011" name="Stand. Genomic Sci.">
        <title>Complete genome sequence of 'Thioalkalivibrio sulfidophilus' HL-EbGr7.</title>
        <authorList>
            <person name="Muyzer G."/>
            <person name="Sorokin D.Y."/>
            <person name="Mavromatis K."/>
            <person name="Lapidus A."/>
            <person name="Clum A."/>
            <person name="Ivanova N."/>
            <person name="Pati A."/>
            <person name="d'Haeseleer P."/>
            <person name="Woyke T."/>
            <person name="Kyrpides N.C."/>
        </authorList>
    </citation>
    <scope>NUCLEOTIDE SEQUENCE [LARGE SCALE GENOMIC DNA]</scope>
    <source>
        <strain>HL-EbGR7</strain>
    </source>
</reference>
<dbReference type="EC" id="4.2.1.10" evidence="1"/>
<dbReference type="EMBL" id="CP001339">
    <property type="protein sequence ID" value="ACL71468.1"/>
    <property type="molecule type" value="Genomic_DNA"/>
</dbReference>
<dbReference type="RefSeq" id="WP_012636957.1">
    <property type="nucleotide sequence ID" value="NC_011901.1"/>
</dbReference>
<dbReference type="SMR" id="B8GUV7"/>
<dbReference type="STRING" id="396588.Tgr7_0370"/>
<dbReference type="KEGG" id="tgr:Tgr7_0370"/>
<dbReference type="eggNOG" id="COG0757">
    <property type="taxonomic scope" value="Bacteria"/>
</dbReference>
<dbReference type="HOGENOM" id="CLU_090968_1_0_6"/>
<dbReference type="OrthoDB" id="9790793at2"/>
<dbReference type="UniPathway" id="UPA00053">
    <property type="reaction ID" value="UER00086"/>
</dbReference>
<dbReference type="Proteomes" id="UP000002383">
    <property type="component" value="Chromosome"/>
</dbReference>
<dbReference type="GO" id="GO:0003855">
    <property type="term" value="F:3-dehydroquinate dehydratase activity"/>
    <property type="evidence" value="ECO:0007669"/>
    <property type="project" value="UniProtKB-UniRule"/>
</dbReference>
<dbReference type="GO" id="GO:0008652">
    <property type="term" value="P:amino acid biosynthetic process"/>
    <property type="evidence" value="ECO:0007669"/>
    <property type="project" value="UniProtKB-KW"/>
</dbReference>
<dbReference type="GO" id="GO:0009073">
    <property type="term" value="P:aromatic amino acid family biosynthetic process"/>
    <property type="evidence" value="ECO:0007669"/>
    <property type="project" value="UniProtKB-KW"/>
</dbReference>
<dbReference type="GO" id="GO:0009423">
    <property type="term" value="P:chorismate biosynthetic process"/>
    <property type="evidence" value="ECO:0007669"/>
    <property type="project" value="UniProtKB-UniRule"/>
</dbReference>
<dbReference type="GO" id="GO:0019631">
    <property type="term" value="P:quinate catabolic process"/>
    <property type="evidence" value="ECO:0007669"/>
    <property type="project" value="TreeGrafter"/>
</dbReference>
<dbReference type="CDD" id="cd00466">
    <property type="entry name" value="DHQase_II"/>
    <property type="match status" value="1"/>
</dbReference>
<dbReference type="Gene3D" id="3.40.50.9100">
    <property type="entry name" value="Dehydroquinase, class II"/>
    <property type="match status" value="1"/>
</dbReference>
<dbReference type="HAMAP" id="MF_00169">
    <property type="entry name" value="AroQ"/>
    <property type="match status" value="1"/>
</dbReference>
<dbReference type="InterPro" id="IPR001874">
    <property type="entry name" value="DHquinase_II"/>
</dbReference>
<dbReference type="InterPro" id="IPR018509">
    <property type="entry name" value="DHquinase_II_CS"/>
</dbReference>
<dbReference type="InterPro" id="IPR036441">
    <property type="entry name" value="DHquinase_II_sf"/>
</dbReference>
<dbReference type="NCBIfam" id="TIGR01088">
    <property type="entry name" value="aroQ"/>
    <property type="match status" value="1"/>
</dbReference>
<dbReference type="NCBIfam" id="NF003804">
    <property type="entry name" value="PRK05395.1-1"/>
    <property type="match status" value="1"/>
</dbReference>
<dbReference type="NCBIfam" id="NF003805">
    <property type="entry name" value="PRK05395.1-2"/>
    <property type="match status" value="1"/>
</dbReference>
<dbReference type="NCBIfam" id="NF003806">
    <property type="entry name" value="PRK05395.1-3"/>
    <property type="match status" value="1"/>
</dbReference>
<dbReference type="NCBIfam" id="NF003807">
    <property type="entry name" value="PRK05395.1-4"/>
    <property type="match status" value="1"/>
</dbReference>
<dbReference type="PANTHER" id="PTHR21272">
    <property type="entry name" value="CATABOLIC 3-DEHYDROQUINASE"/>
    <property type="match status" value="1"/>
</dbReference>
<dbReference type="PANTHER" id="PTHR21272:SF3">
    <property type="entry name" value="CATABOLIC 3-DEHYDROQUINASE"/>
    <property type="match status" value="1"/>
</dbReference>
<dbReference type="Pfam" id="PF01220">
    <property type="entry name" value="DHquinase_II"/>
    <property type="match status" value="1"/>
</dbReference>
<dbReference type="PIRSF" id="PIRSF001399">
    <property type="entry name" value="DHquinase_II"/>
    <property type="match status" value="1"/>
</dbReference>
<dbReference type="SUPFAM" id="SSF52304">
    <property type="entry name" value="Type II 3-dehydroquinate dehydratase"/>
    <property type="match status" value="1"/>
</dbReference>
<dbReference type="PROSITE" id="PS01029">
    <property type="entry name" value="DEHYDROQUINASE_II"/>
    <property type="match status" value="1"/>
</dbReference>